<name>TAG76_CAEEL</name>
<proteinExistence type="predicted"/>
<organism>
    <name type="scientific">Caenorhabditis elegans</name>
    <dbReference type="NCBI Taxonomy" id="6239"/>
    <lineage>
        <taxon>Eukaryota</taxon>
        <taxon>Metazoa</taxon>
        <taxon>Ecdysozoa</taxon>
        <taxon>Nematoda</taxon>
        <taxon>Chromadorea</taxon>
        <taxon>Rhabditida</taxon>
        <taxon>Rhabditina</taxon>
        <taxon>Rhabditomorpha</taxon>
        <taxon>Rhabditoidea</taxon>
        <taxon>Rhabditidae</taxon>
        <taxon>Peloderinae</taxon>
        <taxon>Caenorhabditis</taxon>
    </lineage>
</organism>
<feature type="chain" id="PRO_0000065547" description="Putative protein tag-76">
    <location>
        <begin position="1"/>
        <end position="1040"/>
    </location>
</feature>
<feature type="domain" description="PAZ" evidence="1">
    <location>
        <begin position="379"/>
        <end position="486"/>
    </location>
</feature>
<feature type="domain" description="Piwi" evidence="2">
    <location>
        <begin position="660"/>
        <end position="966"/>
    </location>
</feature>
<feature type="region of interest" description="Disordered" evidence="3">
    <location>
        <begin position="1"/>
        <end position="61"/>
    </location>
</feature>
<feature type="region of interest" description="Disordered" evidence="3">
    <location>
        <begin position="322"/>
        <end position="367"/>
    </location>
</feature>
<feature type="compositionally biased region" description="Polar residues" evidence="3">
    <location>
        <begin position="1"/>
        <end position="15"/>
    </location>
</feature>
<feature type="compositionally biased region" description="Low complexity" evidence="3">
    <location>
        <begin position="16"/>
        <end position="32"/>
    </location>
</feature>
<feature type="compositionally biased region" description="Polar residues" evidence="3">
    <location>
        <begin position="33"/>
        <end position="50"/>
    </location>
</feature>
<feature type="compositionally biased region" description="Gly residues" evidence="3">
    <location>
        <begin position="333"/>
        <end position="356"/>
    </location>
</feature>
<feature type="splice variant" id="VSP_011901" description="In isoform c." evidence="4">
    <original>GISGSGSMSPPITSRPASGQASPLTSNGSLSPPQYAD</original>
    <variation>EGLTSGVFSWALERLPTCLREELQLPLTDTGSCWQTN</variation>
    <location>
        <begin position="19"/>
        <end position="55"/>
    </location>
</feature>
<feature type="splice variant" id="VSP_011900" description="In isoform b." evidence="4">
    <location>
        <begin position="19"/>
        <end position="21"/>
    </location>
</feature>
<feature type="splice variant" id="VSP_011902" description="In isoform c." evidence="4">
    <location>
        <begin position="56"/>
        <end position="1040"/>
    </location>
</feature>
<keyword id="KW-0025">Alternative splicing</keyword>
<keyword id="KW-1185">Reference proteome</keyword>
<dbReference type="EMBL" id="Z29121">
    <property type="protein sequence ID" value="CAA82389.1"/>
    <property type="molecule type" value="Genomic_DNA"/>
</dbReference>
<dbReference type="EMBL" id="Z30215">
    <property type="protein sequence ID" value="CAA82389.1"/>
    <property type="status" value="JOINED"/>
    <property type="molecule type" value="Genomic_DNA"/>
</dbReference>
<dbReference type="EMBL" id="Z29121">
    <property type="protein sequence ID" value="CAB54514.1"/>
    <property type="molecule type" value="Genomic_DNA"/>
</dbReference>
<dbReference type="EMBL" id="Z30215">
    <property type="protein sequence ID" value="CAB54514.1"/>
    <property type="status" value="JOINED"/>
    <property type="molecule type" value="Genomic_DNA"/>
</dbReference>
<dbReference type="EMBL" id="Z30215">
    <property type="protein sequence ID" value="CAB54245.1"/>
    <property type="molecule type" value="Genomic_DNA"/>
</dbReference>
<dbReference type="PIR" id="D88568">
    <property type="entry name" value="D88568"/>
</dbReference>
<dbReference type="PIR" id="S41013">
    <property type="entry name" value="S41013"/>
</dbReference>
<dbReference type="RefSeq" id="NP_499191.1">
    <molecule id="P34681-1"/>
    <property type="nucleotide sequence ID" value="NM_066790.3"/>
</dbReference>
<dbReference type="RefSeq" id="NP_499192.1">
    <molecule id="P34681-2"/>
    <property type="nucleotide sequence ID" value="NM_066791.4"/>
</dbReference>
<dbReference type="RefSeq" id="NP_499193.1">
    <molecule id="P34681-3"/>
    <property type="nucleotide sequence ID" value="NM_066792.3"/>
</dbReference>
<dbReference type="SMR" id="P34681"/>
<dbReference type="FunCoup" id="P34681">
    <property type="interactions" value="4"/>
</dbReference>
<dbReference type="STRING" id="6239.ZK757.3a.1"/>
<dbReference type="PaxDb" id="6239-ZK757.3a.1"/>
<dbReference type="EnsemblMetazoa" id="ZK757.3a.1">
    <molecule id="P34681-1"/>
    <property type="protein sequence ID" value="ZK757.3a.1"/>
    <property type="gene ID" value="WBGene00006449"/>
</dbReference>
<dbReference type="EnsemblMetazoa" id="ZK757.3a.2">
    <molecule id="P34681-1"/>
    <property type="protein sequence ID" value="ZK757.3a.2"/>
    <property type="gene ID" value="WBGene00006449"/>
</dbReference>
<dbReference type="EnsemblMetazoa" id="ZK757.3b.1">
    <molecule id="P34681-2"/>
    <property type="protein sequence ID" value="ZK757.3b.1"/>
    <property type="gene ID" value="WBGene00006449"/>
</dbReference>
<dbReference type="EnsemblMetazoa" id="ZK757.3c.1">
    <molecule id="P34681-3"/>
    <property type="protein sequence ID" value="ZK757.3c.1"/>
    <property type="gene ID" value="WBGene00006449"/>
</dbReference>
<dbReference type="KEGG" id="cel:CELE_ZK757.3"/>
<dbReference type="UCSC" id="ZK757.3b">
    <molecule id="P34681-1"/>
    <property type="organism name" value="c. elegans"/>
</dbReference>
<dbReference type="AGR" id="WB:WBGene00006449"/>
<dbReference type="CTD" id="176400"/>
<dbReference type="WormBase" id="ZK757.3a">
    <property type="protein sequence ID" value="CE01117"/>
    <property type="gene ID" value="WBGene00006449"/>
    <property type="gene designation" value="tag-76"/>
</dbReference>
<dbReference type="WormBase" id="ZK757.3b">
    <property type="protein sequence ID" value="CE24737"/>
    <property type="gene ID" value="WBGene00006449"/>
    <property type="gene designation" value="tag-76"/>
</dbReference>
<dbReference type="WormBase" id="ZK757.3c">
    <property type="protein sequence ID" value="CE24738"/>
    <property type="gene ID" value="WBGene00006449"/>
    <property type="gene designation" value="tag-76"/>
</dbReference>
<dbReference type="eggNOG" id="KOG1041">
    <property type="taxonomic scope" value="Eukaryota"/>
</dbReference>
<dbReference type="GeneTree" id="ENSGT00940000174399"/>
<dbReference type="InParanoid" id="P34681"/>
<dbReference type="OMA" id="MEICEVA"/>
<dbReference type="OrthoDB" id="5971213at2759"/>
<dbReference type="PhylomeDB" id="P34681"/>
<dbReference type="Reactome" id="R-CEL-203927">
    <property type="pathway name" value="MicroRNA (miRNA) biogenesis"/>
</dbReference>
<dbReference type="Reactome" id="R-CEL-426486">
    <property type="pathway name" value="Small interfering RNA (siRNA) biogenesis"/>
</dbReference>
<dbReference type="Reactome" id="R-CEL-5578749">
    <property type="pathway name" value="Transcriptional regulation by small RNAs"/>
</dbReference>
<dbReference type="PRO" id="PR:P34681"/>
<dbReference type="Proteomes" id="UP000001940">
    <property type="component" value="Chromosome III"/>
</dbReference>
<dbReference type="Bgee" id="WBGene00006449">
    <property type="expression patterns" value="Expressed in larva and 1 other cell type or tissue"/>
</dbReference>
<dbReference type="GO" id="GO:0005737">
    <property type="term" value="C:cytoplasm"/>
    <property type="evidence" value="ECO:0000250"/>
    <property type="project" value="WormBase"/>
</dbReference>
<dbReference type="GO" id="GO:0036464">
    <property type="term" value="C:cytoplasmic ribonucleoprotein granule"/>
    <property type="evidence" value="ECO:0000318"/>
    <property type="project" value="GO_Central"/>
</dbReference>
<dbReference type="GO" id="GO:0005634">
    <property type="term" value="C:nucleus"/>
    <property type="evidence" value="ECO:0000318"/>
    <property type="project" value="GO_Central"/>
</dbReference>
<dbReference type="GO" id="GO:0043186">
    <property type="term" value="C:P granule"/>
    <property type="evidence" value="ECO:0000250"/>
    <property type="project" value="WormBase"/>
</dbReference>
<dbReference type="GO" id="GO:0016442">
    <property type="term" value="C:RISC complex"/>
    <property type="evidence" value="ECO:0000318"/>
    <property type="project" value="GO_Central"/>
</dbReference>
<dbReference type="GO" id="GO:0035198">
    <property type="term" value="F:miRNA binding"/>
    <property type="evidence" value="ECO:0000318"/>
    <property type="project" value="GO_Central"/>
</dbReference>
<dbReference type="GO" id="GO:0004521">
    <property type="term" value="F:RNA endonuclease activity"/>
    <property type="evidence" value="ECO:0000318"/>
    <property type="project" value="GO_Central"/>
</dbReference>
<dbReference type="GO" id="GO:0003727">
    <property type="term" value="F:single-stranded RNA binding"/>
    <property type="evidence" value="ECO:0000318"/>
    <property type="project" value="GO_Central"/>
</dbReference>
<dbReference type="GO" id="GO:0035194">
    <property type="term" value="P:regulatory ncRNA-mediated post-transcriptional gene silencing"/>
    <property type="evidence" value="ECO:0000318"/>
    <property type="project" value="GO_Central"/>
</dbReference>
<dbReference type="GO" id="GO:0007283">
    <property type="term" value="P:spermatogenesis"/>
    <property type="evidence" value="ECO:0000315"/>
    <property type="project" value="WormBase"/>
</dbReference>
<dbReference type="CDD" id="cd02846">
    <property type="entry name" value="PAZ_argonaute_like"/>
    <property type="match status" value="1"/>
</dbReference>
<dbReference type="CDD" id="cd04657">
    <property type="entry name" value="Piwi_ago-like"/>
    <property type="match status" value="1"/>
</dbReference>
<dbReference type="Gene3D" id="3.40.50.2300">
    <property type="match status" value="1"/>
</dbReference>
<dbReference type="Gene3D" id="2.170.260.10">
    <property type="entry name" value="paz domain"/>
    <property type="match status" value="1"/>
</dbReference>
<dbReference type="Gene3D" id="3.30.420.10">
    <property type="entry name" value="Ribonuclease H-like superfamily/Ribonuclease H"/>
    <property type="match status" value="1"/>
</dbReference>
<dbReference type="InterPro" id="IPR014811">
    <property type="entry name" value="ArgoL1"/>
</dbReference>
<dbReference type="InterPro" id="IPR032472">
    <property type="entry name" value="ArgoL2"/>
</dbReference>
<dbReference type="InterPro" id="IPR032473">
    <property type="entry name" value="Argonaute_Mid_dom"/>
</dbReference>
<dbReference type="InterPro" id="IPR032474">
    <property type="entry name" value="Argonaute_N"/>
</dbReference>
<dbReference type="InterPro" id="IPR003100">
    <property type="entry name" value="PAZ_dom"/>
</dbReference>
<dbReference type="InterPro" id="IPR036085">
    <property type="entry name" value="PAZ_dom_sf"/>
</dbReference>
<dbReference type="InterPro" id="IPR003165">
    <property type="entry name" value="Piwi"/>
</dbReference>
<dbReference type="InterPro" id="IPR045246">
    <property type="entry name" value="Piwi_ago-like"/>
</dbReference>
<dbReference type="InterPro" id="IPR012337">
    <property type="entry name" value="RNaseH-like_sf"/>
</dbReference>
<dbReference type="InterPro" id="IPR036397">
    <property type="entry name" value="RNaseH_sf"/>
</dbReference>
<dbReference type="PANTHER" id="PTHR22891">
    <property type="entry name" value="EUKARYOTIC TRANSLATION INITIATION FACTOR 2C"/>
    <property type="match status" value="1"/>
</dbReference>
<dbReference type="Pfam" id="PF08699">
    <property type="entry name" value="ArgoL1"/>
    <property type="match status" value="1"/>
</dbReference>
<dbReference type="Pfam" id="PF16488">
    <property type="entry name" value="ArgoL2"/>
    <property type="match status" value="1"/>
</dbReference>
<dbReference type="Pfam" id="PF16487">
    <property type="entry name" value="ArgoMid"/>
    <property type="match status" value="1"/>
</dbReference>
<dbReference type="Pfam" id="PF16486">
    <property type="entry name" value="ArgoN"/>
    <property type="match status" value="1"/>
</dbReference>
<dbReference type="Pfam" id="PF02170">
    <property type="entry name" value="PAZ"/>
    <property type="match status" value="1"/>
</dbReference>
<dbReference type="Pfam" id="PF02171">
    <property type="entry name" value="Piwi"/>
    <property type="match status" value="1"/>
</dbReference>
<dbReference type="SMART" id="SM01163">
    <property type="entry name" value="DUF1785"/>
    <property type="match status" value="1"/>
</dbReference>
<dbReference type="SMART" id="SM00950">
    <property type="entry name" value="Piwi"/>
    <property type="match status" value="1"/>
</dbReference>
<dbReference type="SUPFAM" id="SSF101690">
    <property type="entry name" value="PAZ domain"/>
    <property type="match status" value="1"/>
</dbReference>
<dbReference type="SUPFAM" id="SSF53098">
    <property type="entry name" value="Ribonuclease H-like"/>
    <property type="match status" value="1"/>
</dbReference>
<dbReference type="PROSITE" id="PS50821">
    <property type="entry name" value="PAZ"/>
    <property type="match status" value="1"/>
</dbReference>
<dbReference type="PROSITE" id="PS50822">
    <property type="entry name" value="PIWI"/>
    <property type="match status" value="1"/>
</dbReference>
<protein>
    <recommendedName>
        <fullName>Putative protein tag-76</fullName>
    </recommendedName>
</protein>
<evidence type="ECO:0000255" key="1">
    <source>
        <dbReference type="PROSITE-ProRule" id="PRU00142"/>
    </source>
</evidence>
<evidence type="ECO:0000255" key="2">
    <source>
        <dbReference type="PROSITE-ProRule" id="PRU00150"/>
    </source>
</evidence>
<evidence type="ECO:0000256" key="3">
    <source>
        <dbReference type="SAM" id="MobiDB-lite"/>
    </source>
</evidence>
<evidence type="ECO:0000305" key="4"/>
<sequence>MSRRNATSFVDNNTLTSSGISGSGSMSPPITSRPASGQASPLTSNGSLSPPQYADDQGSVSYNLDSPRDLSPLLLSELACLNMREVVARPGLGTIGRQIPVKSNFFAMDLKNPKMVVIQYHVEIHHPGCRKLDKDEMRIIFWKAVSDHPNIFHNKFALAYDGAHQLYTVARLEFPDDQGSVRLDCEASLPKDNRDRTRCAISIQNVGPVLLEMQRTRTNNLDERVLTPIQILDIICRQSLTCPLLKNSANFYTWKSSCYRIPTAAGQALDLEGGKEMWTGFFSSAHIASNYRPLLNIDVAHTAFYKTRITVLQFMCDVLNERTSKPNRNNPRGPGGPGGPGGYRGGRGGGRGGSYGNFGNRGPPGANVRDDFGGNGLTFTMDTLSRDTQLSSFETRIFGDAIRGMKIRAAHRPNAIRVYKVNSLQLPADKLMFQGIDEEGRQVVCSVADYFSEKYGPLKYPKLPCLHVGPPTRNIFLPMEHCLIDSPQKYNKKMSEKQTSAIIKAAAVDATQREDRIKQLAAQASFGTDPFLKEFGVAVSSQMIQTTARVIQPPPIMFGGNNRSVNPVVFPKDGSWTMDNQTLYMPATCRSYSMIALVDPRDQTSLQTFCQSLTMKATAMGMNFPRWPDLVKYGRSKEDVCTLFTEIADEYRVTNTVCDCIIVVLQSKNSDIYMTVKEQSDIVHGIMSQCVLMKNVSRPTPATCANIVLKLNMKMGGINSRIVADKITNKYLVDQPTMVVGIDVTHPTQAEMRMNMPSVAAIVANVDLLPQSYGANVKVQKKCRESVVYLLDAIRERIITFYRHTKQKPARIIVYRDGVSEGQFSEVLREEIQSIRTACLAIAEDFRPPITYIVVQKRHHARIFCKYQNDMVGKAKNVPPGTTVDTGIVSPEGFDFYLCSHYGVQGTSRPARYHVLLDECKFTADEIQSITYGMCHTYGRCTRSVSIPTPVYYADLVATRARCHVKRKLGLADNNDCDTNSRSSTLASLLNVRTGSGKGKKSYAPSVDDESYSLSDATSDQILQDCVSVATDFKSRMYFI</sequence>
<comment type="alternative products">
    <event type="alternative splicing"/>
    <isoform>
        <id>P34681-1</id>
        <name>a</name>
        <sequence type="displayed"/>
    </isoform>
    <isoform>
        <id>P34681-2</id>
        <name>b</name>
        <sequence type="described" ref="VSP_011900"/>
    </isoform>
    <isoform>
        <id>P34681-3</id>
        <name>c</name>
        <sequence type="described" ref="VSP_011901 VSP_011902"/>
    </isoform>
</comment>
<gene>
    <name type="primary">tag-76</name>
    <name type="ORF">ZK757.3</name>
</gene>
<accession>P34681</accession>
<accession>Q7JMT0</accession>
<accession>Q9TW94</accession>
<reference key="1">
    <citation type="journal article" date="1994" name="Nature">
        <title>2.2 Mb of contiguous nucleotide sequence from chromosome III of C. elegans.</title>
        <authorList>
            <person name="Wilson R."/>
            <person name="Ainscough R."/>
            <person name="Anderson K."/>
            <person name="Baynes C."/>
            <person name="Berks M."/>
            <person name="Bonfield J."/>
            <person name="Burton J."/>
            <person name="Connell M."/>
            <person name="Copsey T."/>
            <person name="Cooper J."/>
            <person name="Coulson A."/>
            <person name="Craxton M."/>
            <person name="Dear S."/>
            <person name="Du Z."/>
            <person name="Durbin R."/>
            <person name="Favello A."/>
            <person name="Fraser A."/>
            <person name="Fulton L."/>
            <person name="Gardner A."/>
            <person name="Green P."/>
            <person name="Hawkins T."/>
            <person name="Hillier L."/>
            <person name="Jier M."/>
            <person name="Johnston L."/>
            <person name="Jones M."/>
            <person name="Kershaw J."/>
            <person name="Kirsten J."/>
            <person name="Laisster N."/>
            <person name="Latreille P."/>
            <person name="Lightning J."/>
            <person name="Lloyd C."/>
            <person name="Mortimore B."/>
            <person name="O'Callaghan M."/>
            <person name="Parsons J."/>
            <person name="Percy C."/>
            <person name="Rifken L."/>
            <person name="Roopra A."/>
            <person name="Saunders D."/>
            <person name="Shownkeen R."/>
            <person name="Sims M."/>
            <person name="Smaldon N."/>
            <person name="Smith A."/>
            <person name="Smith M."/>
            <person name="Sonnhammer E."/>
            <person name="Staden R."/>
            <person name="Sulston J."/>
            <person name="Thierry-Mieg J."/>
            <person name="Thomas K."/>
            <person name="Vaudin M."/>
            <person name="Vaughan K."/>
            <person name="Waterston R."/>
            <person name="Watson A."/>
            <person name="Weinstock L."/>
            <person name="Wilkinson-Sproat J."/>
            <person name="Wohldman P."/>
        </authorList>
    </citation>
    <scope>NUCLEOTIDE SEQUENCE [LARGE SCALE GENOMIC DNA]</scope>
    <source>
        <strain>Bristol N2</strain>
    </source>
</reference>
<reference key="2">
    <citation type="journal article" date="1998" name="Science">
        <title>Genome sequence of the nematode C. elegans: a platform for investigating biology.</title>
        <authorList>
            <consortium name="The C. elegans sequencing consortium"/>
        </authorList>
    </citation>
    <scope>NUCLEOTIDE SEQUENCE [LARGE SCALE GENOMIC DNA]</scope>
    <scope>ALTERNATIVE SPLICING</scope>
    <source>
        <strain>Bristol N2</strain>
    </source>
</reference>